<keyword id="KW-1003">Cell membrane</keyword>
<keyword id="KW-0408">Iron</keyword>
<keyword id="KW-0472">Membrane</keyword>
<keyword id="KW-1185">Reference proteome</keyword>
<keyword id="KW-0812">Transmembrane</keyword>
<keyword id="KW-1133">Transmembrane helix</keyword>
<keyword id="KW-0813">Transport</keyword>
<organism>
    <name type="scientific">Staphylococcus aureus (strain NCTC 8325 / PS 47)</name>
    <dbReference type="NCBI Taxonomy" id="93061"/>
    <lineage>
        <taxon>Bacteria</taxon>
        <taxon>Bacillati</taxon>
        <taxon>Bacillota</taxon>
        <taxon>Bacilli</taxon>
        <taxon>Bacillales</taxon>
        <taxon>Staphylococcaceae</taxon>
        <taxon>Staphylococcus</taxon>
    </lineage>
</organism>
<sequence length="321" mass="35078">MMIKNKKKLLFLCLLVILIATAYISFVTGTIKLSFNDLFTKFTTGSNEAVDSIIDLRLPRILIALMVGAMLAVSGALLQAALQNPLAEANIIGVSSGALIMRALCMLFIPQLYFYLPLLSFIGGLIPFLIIILLHSKFRFNAVSMILVGVALFVLLNGVLEILTQNPLMKIPQGLTMKIWSDVYILAVSALLGLILTLLLSPKLNLLNLDDIQARSIGFNIDRYRWLTGLLAVFLASATVAIVGQLAFLGIIVHVVRKLVGGNYRVLIPFSTVIGAWLLLVADLLGRVIQPPLEIPANAILMIVGGPMLIYLICQSQRNRI</sequence>
<evidence type="ECO:0000255" key="1"/>
<evidence type="ECO:0000269" key="2">
    <source>
    </source>
</evidence>
<evidence type="ECO:0000305" key="3"/>
<evidence type="ECO:0000305" key="4">
    <source>
    </source>
</evidence>
<name>ISDF_STAA8</name>
<gene>
    <name type="primary">isdF</name>
    <name type="synonym">sirG</name>
    <name type="ordered locus">SAOUHSC_01086</name>
</gene>
<dbReference type="EMBL" id="AY061874">
    <property type="protein sequence ID" value="AAL33764.1"/>
    <property type="molecule type" value="Genomic_DNA"/>
</dbReference>
<dbReference type="EMBL" id="CP000253">
    <property type="protein sequence ID" value="ABD30201.1"/>
    <property type="status" value="ALT_SEQ"/>
    <property type="molecule type" value="Genomic_DNA"/>
</dbReference>
<dbReference type="RefSeq" id="WP_011447003.1">
    <property type="nucleotide sequence ID" value="NC_007795.1"/>
</dbReference>
<dbReference type="RefSeq" id="YP_499631.1">
    <property type="nucleotide sequence ID" value="NC_007795.1"/>
</dbReference>
<dbReference type="SMR" id="Q2FZE5"/>
<dbReference type="STRING" id="93061.SAOUHSC_01086"/>
<dbReference type="PaxDb" id="1280-SAXN108_1129"/>
<dbReference type="GeneID" id="3919247"/>
<dbReference type="KEGG" id="sao:SAOUHSC_01086"/>
<dbReference type="PATRIC" id="fig|93061.5.peg.995"/>
<dbReference type="eggNOG" id="COG0609">
    <property type="taxonomic scope" value="Bacteria"/>
</dbReference>
<dbReference type="HOGENOM" id="CLU_013016_0_3_9"/>
<dbReference type="OrthoDB" id="9811721at2"/>
<dbReference type="Proteomes" id="UP000008816">
    <property type="component" value="Chromosome"/>
</dbReference>
<dbReference type="GO" id="GO:0005886">
    <property type="term" value="C:plasma membrane"/>
    <property type="evidence" value="ECO:0000318"/>
    <property type="project" value="GO_Central"/>
</dbReference>
<dbReference type="GO" id="GO:0022857">
    <property type="term" value="F:transmembrane transporter activity"/>
    <property type="evidence" value="ECO:0000318"/>
    <property type="project" value="GO_Central"/>
</dbReference>
<dbReference type="GO" id="GO:0033214">
    <property type="term" value="P:siderophore-dependent iron import into cell"/>
    <property type="evidence" value="ECO:0000318"/>
    <property type="project" value="GO_Central"/>
</dbReference>
<dbReference type="CDD" id="cd06550">
    <property type="entry name" value="TM_ABC_iron-siderophores_like"/>
    <property type="match status" value="1"/>
</dbReference>
<dbReference type="FunFam" id="1.10.3470.10:FF:000001">
    <property type="entry name" value="Vitamin B12 ABC transporter permease BtuC"/>
    <property type="match status" value="1"/>
</dbReference>
<dbReference type="Gene3D" id="1.10.3470.10">
    <property type="entry name" value="ABC transporter involved in vitamin B12 uptake, BtuC"/>
    <property type="match status" value="1"/>
</dbReference>
<dbReference type="InterPro" id="IPR037294">
    <property type="entry name" value="ABC_BtuC-like"/>
</dbReference>
<dbReference type="InterPro" id="IPR000522">
    <property type="entry name" value="ABC_transptr_permease_BtuC"/>
</dbReference>
<dbReference type="PANTHER" id="PTHR30472">
    <property type="entry name" value="FERRIC ENTEROBACTIN TRANSPORT SYSTEM PERMEASE PROTEIN"/>
    <property type="match status" value="1"/>
</dbReference>
<dbReference type="PANTHER" id="PTHR30472:SF21">
    <property type="entry name" value="HEME-IRON TRANSPORT SYSTEM PERMEASE PROTEIN ISDF-RELATED"/>
    <property type="match status" value="1"/>
</dbReference>
<dbReference type="Pfam" id="PF01032">
    <property type="entry name" value="FecCD"/>
    <property type="match status" value="1"/>
</dbReference>
<dbReference type="SUPFAM" id="SSF81345">
    <property type="entry name" value="ABC transporter involved in vitamin B12 uptake, BtuC"/>
    <property type="match status" value="1"/>
</dbReference>
<accession>Q2FZE5</accession>
<accession>Q8KQR4</accession>
<proteinExistence type="evidence at transcript level"/>
<feature type="chain" id="PRO_0000372460" description="Probable heme-iron transport system permease protein IsdF">
    <location>
        <begin position="1"/>
        <end position="321"/>
    </location>
</feature>
<feature type="transmembrane region" description="Helical" evidence="1">
    <location>
        <begin position="9"/>
        <end position="29"/>
    </location>
</feature>
<feature type="transmembrane region" description="Helical" evidence="1">
    <location>
        <begin position="61"/>
        <end position="81"/>
    </location>
</feature>
<feature type="transmembrane region" description="Helical" evidence="1">
    <location>
        <begin position="89"/>
        <end position="109"/>
    </location>
</feature>
<feature type="transmembrane region" description="Helical" evidence="1">
    <location>
        <begin position="114"/>
        <end position="134"/>
    </location>
</feature>
<feature type="transmembrane region" description="Helical" evidence="1">
    <location>
        <begin position="143"/>
        <end position="163"/>
    </location>
</feature>
<feature type="transmembrane region" description="Helical" evidence="1">
    <location>
        <begin position="179"/>
        <end position="199"/>
    </location>
</feature>
<feature type="transmembrane region" description="Helical" evidence="1">
    <location>
        <begin position="233"/>
        <end position="253"/>
    </location>
</feature>
<feature type="transmembrane region" description="Helical" evidence="1">
    <location>
        <begin position="267"/>
        <end position="287"/>
    </location>
</feature>
<feature type="transmembrane region" description="Helical" evidence="1">
    <location>
        <begin position="294"/>
        <end position="314"/>
    </location>
</feature>
<feature type="sequence conflict" description="In Ref. 1; AAL33764." evidence="3" ref="1">
    <original>V</original>
    <variation>VP</variation>
    <location>
        <position position="253"/>
    </location>
</feature>
<reference key="1">
    <citation type="journal article" date="2002" name="Mol. Microbiol.">
        <title>Transferrin binding in Staphylococcus aureus: involvement of a cell wall-anchored protein.</title>
        <authorList>
            <person name="Taylor J.M."/>
            <person name="Heinrichs D.E."/>
        </authorList>
    </citation>
    <scope>NUCLEOTIDE SEQUENCE [GENOMIC DNA]</scope>
    <scope>FUNCTION</scope>
    <scope>INDUCTION</scope>
</reference>
<reference key="2">
    <citation type="book" date="2006" name="Gram positive pathogens, 2nd edition">
        <title>The Staphylococcus aureus NCTC 8325 genome.</title>
        <editorList>
            <person name="Fischetti V."/>
            <person name="Novick R."/>
            <person name="Ferretti J."/>
            <person name="Portnoy D."/>
            <person name="Rood J."/>
        </editorList>
        <authorList>
            <person name="Gillaspy A.F."/>
            <person name="Worrell V."/>
            <person name="Orvis J."/>
            <person name="Roe B.A."/>
            <person name="Dyer D.W."/>
            <person name="Iandolo J.J."/>
        </authorList>
    </citation>
    <scope>NUCLEOTIDE SEQUENCE [LARGE SCALE GENOMIC DNA]</scope>
    <source>
        <strain>NCTC 8325 / PS 47</strain>
    </source>
</reference>
<comment type="function">
    <text evidence="4">Part of the binding-protein-dependent transport system for heme-iron. Responsible for the translocation of the substrate across the membrane (Probable).</text>
</comment>
<comment type="subcellular location">
    <subcellularLocation>
        <location evidence="3">Cell membrane</location>
        <topology evidence="3">Multi-pass membrane protein</topology>
    </subcellularLocation>
</comment>
<comment type="induction">
    <text evidence="2">Repressed by fur in the presence of iron.</text>
</comment>
<comment type="similarity">
    <text evidence="3">Belongs to the binding-protein-dependent transport system permease family. FecCD subfamily.</text>
</comment>
<comment type="sequence caution" evidence="3">
    <conflict type="erroneous initiation">
        <sequence resource="EMBL-CDS" id="ABD30201"/>
    </conflict>
    <text>Truncated N-terminus.</text>
</comment>
<comment type="sequence caution" evidence="3">
    <conflict type="frameshift">
        <sequence resource="EMBL-CDS" id="ABD30201"/>
    </conflict>
</comment>
<protein>
    <recommendedName>
        <fullName>Probable heme-iron transport system permease protein IsdF</fullName>
    </recommendedName>
    <alternativeName>
        <fullName>Iron-regulated surface determinant protein F</fullName>
    </alternativeName>
    <alternativeName>
        <fullName>Staphylococcal iron-regulated protein G</fullName>
    </alternativeName>
</protein>